<comment type="function">
    <text evidence="1">Beta toxins bind voltage-independently at site-4 of sodium channels (Nav) and shift the voltage of activation toward more negative potentials thereby affecting sodium channel activation and promoting spontaneous and repetitive firing.</text>
</comment>
<comment type="subcellular location">
    <subcellularLocation>
        <location evidence="3">Secreted</location>
    </subcellularLocation>
</comment>
<comment type="tissue specificity">
    <text evidence="3">Expressed by the venom gland.</text>
</comment>
<comment type="domain">
    <text evidence="4">Has the structural arrangement of an alpha-helix connected to antiparallel beta-sheets by disulfide bonds (CS-alpha/beta).</text>
</comment>
<comment type="mass spectrometry" mass="7266.0" method="Electrospray" evidence="3"/>
<comment type="similarity">
    <text evidence="4">Belongs to the long (4 C-C) scorpion toxin superfamily. Sodium channel inhibitor family. Beta subfamily.</text>
</comment>
<evidence type="ECO:0000250" key="1"/>
<evidence type="ECO:0000255" key="2">
    <source>
        <dbReference type="PROSITE-ProRule" id="PRU01210"/>
    </source>
</evidence>
<evidence type="ECO:0000269" key="3">
    <source>
    </source>
</evidence>
<evidence type="ECO:0000305" key="4"/>
<keyword id="KW-0903">Direct protein sequencing</keyword>
<keyword id="KW-1015">Disulfide bond</keyword>
<keyword id="KW-0872">Ion channel impairing toxin</keyword>
<keyword id="KW-0528">Neurotoxin</keyword>
<keyword id="KW-0964">Secreted</keyword>
<keyword id="KW-0732">Signal</keyword>
<keyword id="KW-0800">Toxin</keyword>
<keyword id="KW-0738">Voltage-gated sodium channel impairing toxin</keyword>
<accession>P84685</accession>
<accession>H1ZZH5</accession>
<proteinExistence type="evidence at protein level"/>
<protein>
    <recommendedName>
        <fullName>Toxin To6</fullName>
    </recommendedName>
    <alternativeName>
        <fullName>PT-alpha* NaTx7.5</fullName>
    </alternativeName>
    <alternativeName>
        <fullName>Toxin Tc43</fullName>
    </alternativeName>
    <alternativeName>
        <fullName>Toxin To43</fullName>
    </alternativeName>
</protein>
<sequence length="85" mass="9385">MSIFPIILALLLIGLDEGEALDGYPLSKNNYCKIYCPDEKVCKWSCKHRAGATNGKGDCINKGCYCYDVAPGTEMYPGRLPCNPY</sequence>
<dbReference type="EMBL" id="HE585229">
    <property type="protein sequence ID" value="CCD31423.1"/>
    <property type="molecule type" value="mRNA"/>
</dbReference>
<dbReference type="SMR" id="P84685"/>
<dbReference type="GO" id="GO:0005576">
    <property type="term" value="C:extracellular region"/>
    <property type="evidence" value="ECO:0007005"/>
    <property type="project" value="UniProtKB"/>
</dbReference>
<dbReference type="GO" id="GO:0008200">
    <property type="term" value="F:ion channel inhibitor activity"/>
    <property type="evidence" value="ECO:0007669"/>
    <property type="project" value="InterPro"/>
</dbReference>
<dbReference type="GO" id="GO:0017080">
    <property type="term" value="F:sodium channel regulator activity"/>
    <property type="evidence" value="ECO:0007669"/>
    <property type="project" value="UniProtKB-KW"/>
</dbReference>
<dbReference type="GO" id="GO:0090729">
    <property type="term" value="F:toxin activity"/>
    <property type="evidence" value="ECO:0007669"/>
    <property type="project" value="UniProtKB-KW"/>
</dbReference>
<dbReference type="Gene3D" id="3.30.30.10">
    <property type="entry name" value="Knottin, scorpion toxin-like"/>
    <property type="match status" value="1"/>
</dbReference>
<dbReference type="InterPro" id="IPR044062">
    <property type="entry name" value="LCN-type_CS_alpha_beta_dom"/>
</dbReference>
<dbReference type="InterPro" id="IPR036574">
    <property type="entry name" value="Scorpion_toxin-like_sf"/>
</dbReference>
<dbReference type="SUPFAM" id="SSF57095">
    <property type="entry name" value="Scorpion toxin-like"/>
    <property type="match status" value="1"/>
</dbReference>
<dbReference type="PROSITE" id="PS51863">
    <property type="entry name" value="LCN_CSAB"/>
    <property type="match status" value="1"/>
</dbReference>
<feature type="signal peptide" evidence="3">
    <location>
        <begin position="1"/>
        <end position="20"/>
    </location>
</feature>
<feature type="chain" id="PRO_5000851424" description="Toxin To6">
    <location>
        <begin position="21"/>
        <end position="85"/>
    </location>
</feature>
<feature type="domain" description="LCN-type CS-alpha/beta" evidence="2">
    <location>
        <begin position="21"/>
        <end position="83"/>
    </location>
</feature>
<feature type="disulfide bond" evidence="2">
    <location>
        <begin position="32"/>
        <end position="82"/>
    </location>
</feature>
<feature type="disulfide bond" evidence="2">
    <location>
        <begin position="36"/>
        <end position="59"/>
    </location>
</feature>
<feature type="disulfide bond" evidence="2">
    <location>
        <begin position="42"/>
        <end position="64"/>
    </location>
</feature>
<feature type="disulfide bond" evidence="2">
    <location>
        <begin position="46"/>
        <end position="66"/>
    </location>
</feature>
<organism>
    <name type="scientific">Tityus obscurus</name>
    <name type="common">Amazonian scorpion</name>
    <name type="synonym">Tityus cambridgei</name>
    <dbReference type="NCBI Taxonomy" id="1221240"/>
    <lineage>
        <taxon>Eukaryota</taxon>
        <taxon>Metazoa</taxon>
        <taxon>Ecdysozoa</taxon>
        <taxon>Arthropoda</taxon>
        <taxon>Chelicerata</taxon>
        <taxon>Arachnida</taxon>
        <taxon>Scorpiones</taxon>
        <taxon>Buthida</taxon>
        <taxon>Buthoidea</taxon>
        <taxon>Buthidae</taxon>
        <taxon>Tityus</taxon>
    </lineage>
</organism>
<name>SCX6_TITOB</name>
<reference key="1">
    <citation type="journal article" date="2012" name="PLoS ONE">
        <title>Identification and phylogenetic analysis of Tityus pachyurus and Tityus obscurus novel putative Na+-channel scorpion toxins.</title>
        <authorList>
            <person name="Guerrero-Vargas J.A."/>
            <person name="Mourao C.B."/>
            <person name="Quintero-Hernandez V."/>
            <person name="Possani L.D."/>
            <person name="Schwartz E.F."/>
        </authorList>
    </citation>
    <scope>NUCLEOTIDE SEQUENCE [MRNA]</scope>
    <scope>NOMENCLATURE</scope>
    <source>
        <tissue>Venom gland</tissue>
    </source>
</reference>
<reference evidence="4" key="2">
    <citation type="journal article" date="2004" name="J. Chromatogr. B">
        <title>Proteomics of the venom from the Amazonian scorpion Tityus cambridgei and the role of prolines on mass spectrometry analysis of toxins.</title>
        <authorList>
            <person name="Batista C.V.F."/>
            <person name="del Pozo L."/>
            <person name="Zamudio F.Z."/>
            <person name="Contreras S."/>
            <person name="Becerril B."/>
            <person name="Wanke E."/>
            <person name="Possani L.D."/>
        </authorList>
    </citation>
    <scope>PROTEIN SEQUENCE OF 21-30</scope>
    <scope>SUBCELLULAR LOCATION</scope>
    <scope>TISSUE SPECIFICITY</scope>
    <scope>MASS SPECTROMETRY</scope>
    <source>
        <tissue evidence="3">Venom</tissue>
    </source>
</reference>